<comment type="function">
    <text evidence="1">Involved in the biosynthesis of the yellow-orange carotenoid staphyloxanthin, which plays a role in the virulence via its protective function against oxidative stress. Catalyzes three successive dehydrogenation reactions that lead to the introduction of three double bonds into 4,4'-diapophytoene (dehydrosqualene), with 4,4'-diapophytofluene and 4,4'-diapo-zeta-carotene as intermediates, and 4,4'-diaponeurosporene (the major deep-yellow pigment in staphylococci strains) as the end product.</text>
</comment>
<comment type="catalytic activity">
    <reaction evidence="1">
        <text>15-cis-4,4'-diapophytoene + 3 FAD + 3 H(+) = all-trans-4,4'-diaponeurosporene + 3 FADH2</text>
        <dbReference type="Rhea" id="RHEA:42800"/>
        <dbReference type="ChEBI" id="CHEBI:15378"/>
        <dbReference type="ChEBI" id="CHEBI:57692"/>
        <dbReference type="ChEBI" id="CHEBI:58307"/>
        <dbReference type="ChEBI" id="CHEBI:62738"/>
        <dbReference type="ChEBI" id="CHEBI:62743"/>
    </reaction>
</comment>
<comment type="pathway">
    <text evidence="1">Carotenoid biosynthesis; staphyloxanthin biosynthesis; staphyloxanthin from farnesyl diphosphate: step 2/5.</text>
</comment>
<comment type="similarity">
    <text evidence="3">Belongs to the carotenoid/retinoid oxidoreductase family. CrtN subfamily.</text>
</comment>
<proteinExistence type="inferred from homology"/>
<evidence type="ECO:0000250" key="1">
    <source>
        <dbReference type="UniProtKB" id="O07855"/>
    </source>
</evidence>
<evidence type="ECO:0000255" key="2"/>
<evidence type="ECO:0000305" key="3"/>
<keyword id="KW-0125">Carotenoid biosynthesis</keyword>
<keyword id="KW-0274">FAD</keyword>
<keyword id="KW-0285">Flavoprotein</keyword>
<keyword id="KW-0560">Oxidoreductase</keyword>
<keyword id="KW-0843">Virulence</keyword>
<accession>Q99R76</accession>
<dbReference type="EC" id="1.3.8.-" evidence="1"/>
<dbReference type="EMBL" id="BA000017">
    <property type="protein sequence ID" value="BAB58723.1"/>
    <property type="molecule type" value="Genomic_DNA"/>
</dbReference>
<dbReference type="RefSeq" id="WP_000686168.1">
    <property type="nucleotide sequence ID" value="NC_002758.2"/>
</dbReference>
<dbReference type="SMR" id="Q99R76"/>
<dbReference type="ChEMBL" id="CHEMBL4105905"/>
<dbReference type="KEGG" id="sav:SAV2561"/>
<dbReference type="HOGENOM" id="CLU_019722_2_1_9"/>
<dbReference type="PhylomeDB" id="Q99R76"/>
<dbReference type="UniPathway" id="UPA00029">
    <property type="reaction ID" value="UER00557"/>
</dbReference>
<dbReference type="Proteomes" id="UP000002481">
    <property type="component" value="Chromosome"/>
</dbReference>
<dbReference type="GO" id="GO:0102223">
    <property type="term" value="F:4,4'-diapophytoene desaturase (4,4'-diaponeurosporene-forming)"/>
    <property type="evidence" value="ECO:0007669"/>
    <property type="project" value="RHEA"/>
</dbReference>
<dbReference type="GO" id="GO:0016117">
    <property type="term" value="P:carotenoid biosynthetic process"/>
    <property type="evidence" value="ECO:0007669"/>
    <property type="project" value="UniProtKB-KW"/>
</dbReference>
<dbReference type="Gene3D" id="3.50.50.60">
    <property type="entry name" value="FAD/NAD(P)-binding domain"/>
    <property type="match status" value="2"/>
</dbReference>
<dbReference type="InterPro" id="IPR002937">
    <property type="entry name" value="Amino_oxidase"/>
</dbReference>
<dbReference type="InterPro" id="IPR014105">
    <property type="entry name" value="Carotenoid/retinoid_OxRdtase"/>
</dbReference>
<dbReference type="InterPro" id="IPR036188">
    <property type="entry name" value="FAD/NAD-bd_sf"/>
</dbReference>
<dbReference type="NCBIfam" id="TIGR02734">
    <property type="entry name" value="crtI_fam"/>
    <property type="match status" value="1"/>
</dbReference>
<dbReference type="PANTHER" id="PTHR43734">
    <property type="entry name" value="PHYTOENE DESATURASE"/>
    <property type="match status" value="1"/>
</dbReference>
<dbReference type="PANTHER" id="PTHR43734:SF1">
    <property type="entry name" value="PHYTOENE DESATURASE"/>
    <property type="match status" value="1"/>
</dbReference>
<dbReference type="Pfam" id="PF01593">
    <property type="entry name" value="Amino_oxidase"/>
    <property type="match status" value="1"/>
</dbReference>
<dbReference type="PRINTS" id="PR00419">
    <property type="entry name" value="ADXRDTASE"/>
</dbReference>
<dbReference type="SUPFAM" id="SSF51905">
    <property type="entry name" value="FAD/NAD(P)-binding domain"/>
    <property type="match status" value="1"/>
</dbReference>
<feature type="chain" id="PRO_0000272194" description="4,4'-diapophytoene desaturase (4,4'-diaponeurosporene-forming)">
    <location>
        <begin position="1"/>
        <end position="502"/>
    </location>
</feature>
<feature type="binding site" evidence="2">
    <location>
        <begin position="5"/>
        <end position="17"/>
    </location>
    <ligand>
        <name>FAD</name>
        <dbReference type="ChEBI" id="CHEBI:57692"/>
    </ligand>
</feature>
<protein>
    <recommendedName>
        <fullName evidence="1">4,4'-diapophytoene desaturase (4,4'-diaponeurosporene-forming)</fullName>
        <ecNumber evidence="1">1.3.8.-</ecNumber>
    </recommendedName>
    <alternativeName>
        <fullName evidence="1">Dehydrosqualene desaturase</fullName>
    </alternativeName>
</protein>
<reference key="1">
    <citation type="journal article" date="2001" name="Lancet">
        <title>Whole genome sequencing of meticillin-resistant Staphylococcus aureus.</title>
        <authorList>
            <person name="Kuroda M."/>
            <person name="Ohta T."/>
            <person name="Uchiyama I."/>
            <person name="Baba T."/>
            <person name="Yuzawa H."/>
            <person name="Kobayashi I."/>
            <person name="Cui L."/>
            <person name="Oguchi A."/>
            <person name="Aoki K."/>
            <person name="Nagai Y."/>
            <person name="Lian J.-Q."/>
            <person name="Ito T."/>
            <person name="Kanamori M."/>
            <person name="Matsumaru H."/>
            <person name="Maruyama A."/>
            <person name="Murakami H."/>
            <person name="Hosoyama A."/>
            <person name="Mizutani-Ui Y."/>
            <person name="Takahashi N.K."/>
            <person name="Sawano T."/>
            <person name="Inoue R."/>
            <person name="Kaito C."/>
            <person name="Sekimizu K."/>
            <person name="Hirakawa H."/>
            <person name="Kuhara S."/>
            <person name="Goto S."/>
            <person name="Yabuzaki J."/>
            <person name="Kanehisa M."/>
            <person name="Yamashita A."/>
            <person name="Oshima K."/>
            <person name="Furuya K."/>
            <person name="Yoshino C."/>
            <person name="Shiba T."/>
            <person name="Hattori M."/>
            <person name="Ogasawara N."/>
            <person name="Hayashi H."/>
            <person name="Hiramatsu K."/>
        </authorList>
    </citation>
    <scope>NUCLEOTIDE SEQUENCE [LARGE SCALE GENOMIC DNA]</scope>
    <source>
        <strain>Mu50 / ATCC 700699</strain>
    </source>
</reference>
<gene>
    <name evidence="1" type="primary">crtN</name>
    <name type="ordered locus">SAV2561</name>
</gene>
<name>CRTN_STAAM</name>
<organism>
    <name type="scientific">Staphylococcus aureus (strain Mu50 / ATCC 700699)</name>
    <dbReference type="NCBI Taxonomy" id="158878"/>
    <lineage>
        <taxon>Bacteria</taxon>
        <taxon>Bacillati</taxon>
        <taxon>Bacillota</taxon>
        <taxon>Bacilli</taxon>
        <taxon>Bacillales</taxon>
        <taxon>Staphylococcaceae</taxon>
        <taxon>Staphylococcus</taxon>
    </lineage>
</organism>
<sequence>MKIAVIGAGVTGLAAAARIASQGHEVTIFEKNNNVGGRMNQLKKDGFTFDMGPTIVMMPDVYKDVFTACGKNYEDYIELRQLRYIYDVYFDHDDRITVPTDLAELQQMLESIEPGSTHGFMSFLTDVYKKYEIARRYFLERTYRKPSDFYNMTSLVQGAKLKTLNHADQLIEHYIDNEKIQKLLAFQTLYIGIDPKRGPSLYSIIPMIEMMFGVHFIKGGMYGMAQGLAQLNKDLGVNIELNAEIEQIIIDPKFKRADAIKVNGDIRKFDKILCTADFPSVAESLMPDFAPIKKYPPHKIADLDYSCSAFLMYIGIDIDVTDQVRLHNVIFSDDFRGNIEEIFEGRLSYDPSIYVYVPAVADKSLAPEGKTGIYVLMPTPELKTGSGIDWSDEALTQQIKEIIYRKLATIEVFEDIKSHIVSETIFTPNDFEQTYHAKFGSAFGLMPTLAQSNYYRPQNVSRDYKDLYFAGASTHPGAGVPIVLTSAKITVDEMIKDIERGV</sequence>